<name>ECFT_THEOJ</name>
<feature type="chain" id="PRO_0000409003" description="Energy-coupling factor transporter transmembrane protein EcfT">
    <location>
        <begin position="1"/>
        <end position="265"/>
    </location>
</feature>
<feature type="transmembrane region" description="Helical" evidence="1">
    <location>
        <begin position="32"/>
        <end position="52"/>
    </location>
</feature>
<feature type="transmembrane region" description="Helical" evidence="1">
    <location>
        <begin position="72"/>
        <end position="92"/>
    </location>
</feature>
<feature type="transmembrane region" description="Helical" evidence="1">
    <location>
        <begin position="115"/>
        <end position="135"/>
    </location>
</feature>
<feature type="transmembrane region" description="Helical" evidence="1">
    <location>
        <begin position="150"/>
        <end position="170"/>
    </location>
</feature>
<feature type="transmembrane region" description="Helical" evidence="1">
    <location>
        <begin position="245"/>
        <end position="265"/>
    </location>
</feature>
<proteinExistence type="inferred from homology"/>
<comment type="function">
    <text evidence="1">Transmembrane (T) component of an energy-coupling factor (ECF) ABC-transporter complex. Unlike classic ABC transporters this ECF transporter provides the energy necessary to transport a number of different substrates.</text>
</comment>
<comment type="subunit">
    <text evidence="1">Forms a stable energy-coupling factor (ECF) transporter complex composed of 2 membrane-embedded substrate-binding proteins (S component), 2 ATP-binding proteins (A component) and 2 transmembrane proteins (T component). May be able to interact with more than 1 S component at a time (By similarity).</text>
</comment>
<comment type="subcellular location">
    <subcellularLocation>
        <location evidence="1">Cell membrane</location>
        <topology evidence="1">Multi-pass membrane protein</topology>
    </subcellularLocation>
</comment>
<comment type="similarity">
    <text evidence="1">Belongs to the energy-coupling factor EcfT family.</text>
</comment>
<protein>
    <recommendedName>
        <fullName evidence="1">Energy-coupling factor transporter transmembrane protein EcfT</fullName>
        <shortName evidence="1">ECF transporter T component EcfT</shortName>
    </recommendedName>
</protein>
<accession>D9RZP4</accession>
<organism>
    <name type="scientific">Thermosediminibacter oceani (strain ATCC BAA-1034 / DSM 16646 / JW/IW-1228P)</name>
    <dbReference type="NCBI Taxonomy" id="555079"/>
    <lineage>
        <taxon>Bacteria</taxon>
        <taxon>Bacillati</taxon>
        <taxon>Bacillota</taxon>
        <taxon>Clostridia</taxon>
        <taxon>Thermosediminibacterales</taxon>
        <taxon>Thermosediminibacteraceae</taxon>
        <taxon>Thermosediminibacter</taxon>
    </lineage>
</organism>
<evidence type="ECO:0000255" key="1">
    <source>
        <dbReference type="HAMAP-Rule" id="MF_01461"/>
    </source>
</evidence>
<dbReference type="EMBL" id="CP002131">
    <property type="protein sequence ID" value="ADL06942.1"/>
    <property type="molecule type" value="Genomic_DNA"/>
</dbReference>
<dbReference type="RefSeq" id="WP_013274993.1">
    <property type="nucleotide sequence ID" value="NC_014377.1"/>
</dbReference>
<dbReference type="SMR" id="D9RZP4"/>
<dbReference type="STRING" id="555079.Toce_0151"/>
<dbReference type="KEGG" id="toc:Toce_0151"/>
<dbReference type="eggNOG" id="COG0619">
    <property type="taxonomic scope" value="Bacteria"/>
</dbReference>
<dbReference type="HOGENOM" id="CLU_056469_2_2_9"/>
<dbReference type="OrthoDB" id="8075495at2"/>
<dbReference type="Proteomes" id="UP000000272">
    <property type="component" value="Chromosome"/>
</dbReference>
<dbReference type="GO" id="GO:0005886">
    <property type="term" value="C:plasma membrane"/>
    <property type="evidence" value="ECO:0007669"/>
    <property type="project" value="UniProtKB-SubCell"/>
</dbReference>
<dbReference type="GO" id="GO:0022857">
    <property type="term" value="F:transmembrane transporter activity"/>
    <property type="evidence" value="ECO:0007669"/>
    <property type="project" value="UniProtKB-UniRule"/>
</dbReference>
<dbReference type="CDD" id="cd16914">
    <property type="entry name" value="EcfT"/>
    <property type="match status" value="1"/>
</dbReference>
<dbReference type="HAMAP" id="MF_01461">
    <property type="entry name" value="EcfT"/>
    <property type="match status" value="1"/>
</dbReference>
<dbReference type="InterPro" id="IPR003339">
    <property type="entry name" value="ABC/ECF_trnsptr_transmembrane"/>
</dbReference>
<dbReference type="InterPro" id="IPR051611">
    <property type="entry name" value="ECF_transporter_component"/>
</dbReference>
<dbReference type="InterPro" id="IPR024919">
    <property type="entry name" value="EcfT"/>
</dbReference>
<dbReference type="PANTHER" id="PTHR34857">
    <property type="entry name" value="SLL0384 PROTEIN"/>
    <property type="match status" value="1"/>
</dbReference>
<dbReference type="PANTHER" id="PTHR34857:SF2">
    <property type="entry name" value="SLL0384 PROTEIN"/>
    <property type="match status" value="1"/>
</dbReference>
<dbReference type="Pfam" id="PF02361">
    <property type="entry name" value="CbiQ"/>
    <property type="match status" value="1"/>
</dbReference>
<keyword id="KW-1003">Cell membrane</keyword>
<keyword id="KW-0472">Membrane</keyword>
<keyword id="KW-1185">Reference proteome</keyword>
<keyword id="KW-0812">Transmembrane</keyword>
<keyword id="KW-1133">Transmembrane helix</keyword>
<keyword id="KW-0813">Transport</keyword>
<gene>
    <name evidence="1" type="primary">ecfT</name>
    <name type="ordered locus">Toce_0151</name>
</gene>
<reference key="1">
    <citation type="journal article" date="2010" name="Stand. Genomic Sci.">
        <title>Complete genome sequence of Thermosediminibacter oceani type strain (JW/IW-1228P).</title>
        <authorList>
            <person name="Pitluck S."/>
            <person name="Yasawong M."/>
            <person name="Munk C."/>
            <person name="Nolan M."/>
            <person name="Lapidus A."/>
            <person name="Lucas S."/>
            <person name="Glavina Del Rio T."/>
            <person name="Tice H."/>
            <person name="Cheng J.F."/>
            <person name="Bruce D."/>
            <person name="Detter C."/>
            <person name="Tapia R."/>
            <person name="Han C."/>
            <person name="Goodwin L."/>
            <person name="Liolios K."/>
            <person name="Ivanova N."/>
            <person name="Mavromatis K."/>
            <person name="Mikhailova N."/>
            <person name="Pati A."/>
            <person name="Chen A."/>
            <person name="Palaniappan K."/>
            <person name="Land M."/>
            <person name="Hauser L."/>
            <person name="Chang Y.J."/>
            <person name="Jeffries C.D."/>
            <person name="Rohde M."/>
            <person name="Spring S."/>
            <person name="Sikorski J."/>
            <person name="Goker M."/>
            <person name="Woyke T."/>
            <person name="Bristow J."/>
            <person name="Eisen J.A."/>
            <person name="Markowitz V."/>
            <person name="Hugenholtz P."/>
            <person name="Kyrpides N.C."/>
            <person name="Klenk H.P."/>
        </authorList>
    </citation>
    <scope>NUCLEOTIDE SEQUENCE [LARGE SCALE GENOMIC DNA]</scope>
    <source>
        <strain>ATCC BAA-1034 / DSM 16646 / JW/IW-1228P</strain>
    </source>
</reference>
<sequence>MREITIGQYIPGNSVIHRLDPRTKILITTAFMVLLFVIDDFTGYAFPAVFIIAVSILSGISLKYMMRGLRPLVIIIVLTFVLNLFMIKGRVIYEIGPLDITYEGLYQGTFMVLRLIMLIVGTSLLTLTTSPIALTDGIESLLKPFRRVGVPAHELAMMMTIALRFIPTLMEETDKIMKAQMARGADFASGNVVQRARSLVPLLVPLFINAFRRADDLAMAMESRCYRGGENRTRMKQLRMTSADLAAFIATGLLAVGSIMSRFIW</sequence>